<dbReference type="EC" id="2.1.1.166" evidence="1"/>
<dbReference type="EMBL" id="CP001365">
    <property type="protein sequence ID" value="ACM56037.1"/>
    <property type="molecule type" value="Genomic_DNA"/>
</dbReference>
<dbReference type="RefSeq" id="WP_012659674.1">
    <property type="nucleotide sequence ID" value="NC_012029.1"/>
</dbReference>
<dbReference type="SMR" id="B9LSX2"/>
<dbReference type="GeneID" id="7401052"/>
<dbReference type="KEGG" id="hla:Hlac_0434"/>
<dbReference type="eggNOG" id="arCOG00079">
    <property type="taxonomic scope" value="Archaea"/>
</dbReference>
<dbReference type="HOGENOM" id="CLU_009422_4_4_2"/>
<dbReference type="Proteomes" id="UP000000740">
    <property type="component" value="Chromosome 1"/>
</dbReference>
<dbReference type="GO" id="GO:0005737">
    <property type="term" value="C:cytoplasm"/>
    <property type="evidence" value="ECO:0007669"/>
    <property type="project" value="UniProtKB-SubCell"/>
</dbReference>
<dbReference type="GO" id="GO:0008650">
    <property type="term" value="F:rRNA (uridine-2'-O-)-methyltransferase activity"/>
    <property type="evidence" value="ECO:0007669"/>
    <property type="project" value="UniProtKB-UniRule"/>
</dbReference>
<dbReference type="Gene3D" id="2.40.50.140">
    <property type="entry name" value="Nucleic acid-binding proteins"/>
    <property type="match status" value="1"/>
</dbReference>
<dbReference type="Gene3D" id="3.40.50.150">
    <property type="entry name" value="Vaccinia Virus protein VP39"/>
    <property type="match status" value="1"/>
</dbReference>
<dbReference type="HAMAP" id="MF_01547">
    <property type="entry name" value="RNA_methyltr_E"/>
    <property type="match status" value="1"/>
</dbReference>
<dbReference type="InterPro" id="IPR012340">
    <property type="entry name" value="NA-bd_OB-fold"/>
</dbReference>
<dbReference type="InterPro" id="IPR050082">
    <property type="entry name" value="RNA_methyltr_RlmE"/>
</dbReference>
<dbReference type="InterPro" id="IPR002877">
    <property type="entry name" value="RNA_MeTrfase_FtsJ_dom"/>
</dbReference>
<dbReference type="InterPro" id="IPR015507">
    <property type="entry name" value="rRNA-MeTfrase_E"/>
</dbReference>
<dbReference type="InterPro" id="IPR029063">
    <property type="entry name" value="SAM-dependent_MTases_sf"/>
</dbReference>
<dbReference type="InterPro" id="IPR002792">
    <property type="entry name" value="TRAM_dom"/>
</dbReference>
<dbReference type="PANTHER" id="PTHR10920:SF13">
    <property type="entry name" value="PRE-RRNA 2'-O-RIBOSE RNA METHYLTRANSFERASE FTSJ3"/>
    <property type="match status" value="1"/>
</dbReference>
<dbReference type="PANTHER" id="PTHR10920">
    <property type="entry name" value="RIBOSOMAL RNA METHYLTRANSFERASE"/>
    <property type="match status" value="1"/>
</dbReference>
<dbReference type="Pfam" id="PF01728">
    <property type="entry name" value="FtsJ"/>
    <property type="match status" value="1"/>
</dbReference>
<dbReference type="Pfam" id="PF01938">
    <property type="entry name" value="TRAM"/>
    <property type="match status" value="1"/>
</dbReference>
<dbReference type="SUPFAM" id="SSF50249">
    <property type="entry name" value="Nucleic acid-binding proteins"/>
    <property type="match status" value="1"/>
</dbReference>
<dbReference type="SUPFAM" id="SSF53335">
    <property type="entry name" value="S-adenosyl-L-methionine-dependent methyltransferases"/>
    <property type="match status" value="1"/>
</dbReference>
<dbReference type="PROSITE" id="PS50926">
    <property type="entry name" value="TRAM"/>
    <property type="match status" value="1"/>
</dbReference>
<comment type="function">
    <text evidence="1">Specifically methylates the uridine in position 2552 of 23S rRNA at the 2'-O position of the ribose in the fully assembled 50S ribosomal subunit.</text>
</comment>
<comment type="catalytic activity">
    <reaction evidence="1">
        <text>uridine(2552) in 23S rRNA + S-adenosyl-L-methionine = 2'-O-methyluridine(2552) in 23S rRNA + S-adenosyl-L-homocysteine + H(+)</text>
        <dbReference type="Rhea" id="RHEA:42720"/>
        <dbReference type="Rhea" id="RHEA-COMP:10202"/>
        <dbReference type="Rhea" id="RHEA-COMP:10203"/>
        <dbReference type="ChEBI" id="CHEBI:15378"/>
        <dbReference type="ChEBI" id="CHEBI:57856"/>
        <dbReference type="ChEBI" id="CHEBI:59789"/>
        <dbReference type="ChEBI" id="CHEBI:65315"/>
        <dbReference type="ChEBI" id="CHEBI:74478"/>
        <dbReference type="EC" id="2.1.1.166"/>
    </reaction>
</comment>
<comment type="subcellular location">
    <subcellularLocation>
        <location evidence="1">Cytoplasm</location>
    </subcellularLocation>
</comment>
<comment type="similarity">
    <text evidence="1">Belongs to the class I-like SAM-binding methyltransferase superfamily. RNA methyltransferase RlmE family.</text>
</comment>
<sequence length="269" mass="29382">MSGKDEYYNKSKQQGYRARSAYKLKQIDEEANLFERGDTVVDLGAAPGGWLQVAAEEVGESGTVVGVDLQRIDDLDDHDVETIRGDMTEERTRHYLREAIGERGADVVISDMAPNMTGEYALDHARSVHLARQAFDVAEELLAPGGDFVVKVFQGEDLDAFREDVRAEFEYLRTVSPPASRDSSSEVYLVAKGLNTAPVAAGDRIEVTVEERGDEGDGIAYVEGYSIFVSDADVGETVTVEVVDAKPRFGFATRVDVGTPDSDESDEGE</sequence>
<reference key="1">
    <citation type="journal article" date="2016" name="Stand. Genomic Sci.">
        <title>Complete genome sequence of the Antarctic Halorubrum lacusprofundi type strain ACAM 34.</title>
        <authorList>
            <person name="Anderson I.J."/>
            <person name="DasSarma P."/>
            <person name="Lucas S."/>
            <person name="Copeland A."/>
            <person name="Lapidus A."/>
            <person name="Del Rio T.G."/>
            <person name="Tice H."/>
            <person name="Dalin E."/>
            <person name="Bruce D.C."/>
            <person name="Goodwin L."/>
            <person name="Pitluck S."/>
            <person name="Sims D."/>
            <person name="Brettin T.S."/>
            <person name="Detter J.C."/>
            <person name="Han C.S."/>
            <person name="Larimer F."/>
            <person name="Hauser L."/>
            <person name="Land M."/>
            <person name="Ivanova N."/>
            <person name="Richardson P."/>
            <person name="Cavicchioli R."/>
            <person name="DasSarma S."/>
            <person name="Woese C.R."/>
            <person name="Kyrpides N.C."/>
        </authorList>
    </citation>
    <scope>NUCLEOTIDE SEQUENCE [LARGE SCALE GENOMIC DNA]</scope>
    <source>
        <strain>ATCC 49239 / DSM 5036 / JCM 8891 / ACAM 34</strain>
    </source>
</reference>
<protein>
    <recommendedName>
        <fullName evidence="1">Ribosomal RNA large subunit methyltransferase E</fullName>
        <ecNumber evidence="1">2.1.1.166</ecNumber>
    </recommendedName>
    <alternativeName>
        <fullName evidence="1">23S rRNA Um2552 methyltransferase</fullName>
    </alternativeName>
    <alternativeName>
        <fullName evidence="1">rRNA (uridine-2'-O-)-methyltransferase</fullName>
    </alternativeName>
</protein>
<feature type="chain" id="PRO_1000185298" description="Ribosomal RNA large subunit methyltransferase E">
    <location>
        <begin position="1"/>
        <end position="269"/>
    </location>
</feature>
<feature type="domain" description="TRAM" evidence="1">
    <location>
        <begin position="198"/>
        <end position="256"/>
    </location>
</feature>
<feature type="active site" description="Proton acceptor" evidence="1">
    <location>
        <position position="151"/>
    </location>
</feature>
<feature type="binding site" evidence="1">
    <location>
        <position position="48"/>
    </location>
    <ligand>
        <name>S-adenosyl-L-methionine</name>
        <dbReference type="ChEBI" id="CHEBI:59789"/>
    </ligand>
</feature>
<feature type="binding site" evidence="1">
    <location>
        <position position="50"/>
    </location>
    <ligand>
        <name>S-adenosyl-L-methionine</name>
        <dbReference type="ChEBI" id="CHEBI:59789"/>
    </ligand>
</feature>
<feature type="binding site" evidence="1">
    <location>
        <position position="68"/>
    </location>
    <ligand>
        <name>S-adenosyl-L-methionine</name>
        <dbReference type="ChEBI" id="CHEBI:59789"/>
    </ligand>
</feature>
<feature type="binding site" evidence="1">
    <location>
        <position position="86"/>
    </location>
    <ligand>
        <name>S-adenosyl-L-methionine</name>
        <dbReference type="ChEBI" id="CHEBI:59789"/>
    </ligand>
</feature>
<feature type="binding site" evidence="1">
    <location>
        <position position="111"/>
    </location>
    <ligand>
        <name>S-adenosyl-L-methionine</name>
        <dbReference type="ChEBI" id="CHEBI:59789"/>
    </ligand>
</feature>
<accession>B9LSX2</accession>
<organism>
    <name type="scientific">Halorubrum lacusprofundi (strain ATCC 49239 / DSM 5036 / JCM 8891 / ACAM 34)</name>
    <dbReference type="NCBI Taxonomy" id="416348"/>
    <lineage>
        <taxon>Archaea</taxon>
        <taxon>Methanobacteriati</taxon>
        <taxon>Methanobacteriota</taxon>
        <taxon>Stenosarchaea group</taxon>
        <taxon>Halobacteria</taxon>
        <taxon>Halobacteriales</taxon>
        <taxon>Haloferacaceae</taxon>
        <taxon>Halorubrum</taxon>
    </lineage>
</organism>
<gene>
    <name evidence="1" type="primary">rlmE</name>
    <name evidence="1" type="synonym">rrmJ</name>
    <name type="ordered locus">Hlac_0434</name>
</gene>
<name>RLME_HALLT</name>
<keyword id="KW-0963">Cytoplasm</keyword>
<keyword id="KW-0489">Methyltransferase</keyword>
<keyword id="KW-1185">Reference proteome</keyword>
<keyword id="KW-0698">rRNA processing</keyword>
<keyword id="KW-0949">S-adenosyl-L-methionine</keyword>
<keyword id="KW-0808">Transferase</keyword>
<evidence type="ECO:0000255" key="1">
    <source>
        <dbReference type="HAMAP-Rule" id="MF_01547"/>
    </source>
</evidence>
<proteinExistence type="inferred from homology"/>